<name>NADE_STRGC</name>
<organism>
    <name type="scientific">Streptococcus gordonii (strain Challis / ATCC 35105 / BCRC 15272 / CH1 / DL1 / V288)</name>
    <dbReference type="NCBI Taxonomy" id="467705"/>
    <lineage>
        <taxon>Bacteria</taxon>
        <taxon>Bacillati</taxon>
        <taxon>Bacillota</taxon>
        <taxon>Bacilli</taxon>
        <taxon>Lactobacillales</taxon>
        <taxon>Streptococcaceae</taxon>
        <taxon>Streptococcus</taxon>
    </lineage>
</organism>
<accession>A8AVT9</accession>
<proteinExistence type="inferred from homology"/>
<evidence type="ECO:0000255" key="1">
    <source>
        <dbReference type="HAMAP-Rule" id="MF_00193"/>
    </source>
</evidence>
<reference key="1">
    <citation type="journal article" date="2007" name="J. Bacteriol.">
        <title>Genome-wide transcriptional changes in Streptococcus gordonii in response to competence signaling peptide.</title>
        <authorList>
            <person name="Vickerman M.M."/>
            <person name="Iobst S."/>
            <person name="Jesionowski A.M."/>
            <person name="Gill S.R."/>
        </authorList>
    </citation>
    <scope>NUCLEOTIDE SEQUENCE [LARGE SCALE GENOMIC DNA]</scope>
    <source>
        <strain>Challis / ATCC 35105 / BCRC 15272 / CH1 / DL1 / V288</strain>
    </source>
</reference>
<gene>
    <name evidence="1" type="primary">nadE</name>
    <name type="ordered locus">SGO_0583</name>
</gene>
<protein>
    <recommendedName>
        <fullName evidence="1">NH(3)-dependent NAD(+) synthetase</fullName>
        <ecNumber evidence="1">6.3.1.5</ecNumber>
    </recommendedName>
</protein>
<keyword id="KW-0067">ATP-binding</keyword>
<keyword id="KW-0436">Ligase</keyword>
<keyword id="KW-0460">Magnesium</keyword>
<keyword id="KW-0479">Metal-binding</keyword>
<keyword id="KW-0520">NAD</keyword>
<keyword id="KW-0547">Nucleotide-binding</keyword>
<keyword id="KW-1185">Reference proteome</keyword>
<feature type="chain" id="PRO_1000077624" description="NH(3)-dependent NAD(+) synthetase">
    <location>
        <begin position="1"/>
        <end position="274"/>
    </location>
</feature>
<feature type="binding site" evidence="1">
    <location>
        <begin position="46"/>
        <end position="53"/>
    </location>
    <ligand>
        <name>ATP</name>
        <dbReference type="ChEBI" id="CHEBI:30616"/>
    </ligand>
</feature>
<feature type="binding site" evidence="1">
    <location>
        <position position="52"/>
    </location>
    <ligand>
        <name>Mg(2+)</name>
        <dbReference type="ChEBI" id="CHEBI:18420"/>
    </ligand>
</feature>
<feature type="binding site" evidence="1">
    <location>
        <position position="140"/>
    </location>
    <ligand>
        <name>deamido-NAD(+)</name>
        <dbReference type="ChEBI" id="CHEBI:58437"/>
    </ligand>
</feature>
<feature type="binding site" evidence="1">
    <location>
        <position position="160"/>
    </location>
    <ligand>
        <name>ATP</name>
        <dbReference type="ChEBI" id="CHEBI:30616"/>
    </ligand>
</feature>
<feature type="binding site" evidence="1">
    <location>
        <position position="165"/>
    </location>
    <ligand>
        <name>Mg(2+)</name>
        <dbReference type="ChEBI" id="CHEBI:18420"/>
    </ligand>
</feature>
<feature type="binding site" evidence="1">
    <location>
        <position position="173"/>
    </location>
    <ligand>
        <name>deamido-NAD(+)</name>
        <dbReference type="ChEBI" id="CHEBI:58437"/>
    </ligand>
</feature>
<feature type="binding site" evidence="1">
    <location>
        <position position="180"/>
    </location>
    <ligand>
        <name>deamido-NAD(+)</name>
        <dbReference type="ChEBI" id="CHEBI:58437"/>
    </ligand>
</feature>
<feature type="binding site" evidence="1">
    <location>
        <position position="189"/>
    </location>
    <ligand>
        <name>ATP</name>
        <dbReference type="ChEBI" id="CHEBI:30616"/>
    </ligand>
</feature>
<feature type="binding site" evidence="1">
    <location>
        <position position="211"/>
    </location>
    <ligand>
        <name>ATP</name>
        <dbReference type="ChEBI" id="CHEBI:30616"/>
    </ligand>
</feature>
<feature type="binding site" evidence="1">
    <location>
        <begin position="260"/>
        <end position="261"/>
    </location>
    <ligand>
        <name>deamido-NAD(+)</name>
        <dbReference type="ChEBI" id="CHEBI:58437"/>
    </ligand>
</feature>
<comment type="function">
    <text evidence="1">Catalyzes the ATP-dependent amidation of deamido-NAD to form NAD. Uses ammonia as a nitrogen source.</text>
</comment>
<comment type="catalytic activity">
    <reaction evidence="1">
        <text>deamido-NAD(+) + NH4(+) + ATP = AMP + diphosphate + NAD(+) + H(+)</text>
        <dbReference type="Rhea" id="RHEA:21188"/>
        <dbReference type="ChEBI" id="CHEBI:15378"/>
        <dbReference type="ChEBI" id="CHEBI:28938"/>
        <dbReference type="ChEBI" id="CHEBI:30616"/>
        <dbReference type="ChEBI" id="CHEBI:33019"/>
        <dbReference type="ChEBI" id="CHEBI:57540"/>
        <dbReference type="ChEBI" id="CHEBI:58437"/>
        <dbReference type="ChEBI" id="CHEBI:456215"/>
        <dbReference type="EC" id="6.3.1.5"/>
    </reaction>
</comment>
<comment type="pathway">
    <text evidence="1">Cofactor biosynthesis; NAD(+) biosynthesis; NAD(+) from deamido-NAD(+) (ammonia route): step 1/1.</text>
</comment>
<comment type="subunit">
    <text evidence="1">Homodimer.</text>
</comment>
<comment type="similarity">
    <text evidence="1">Belongs to the NAD synthetase family.</text>
</comment>
<dbReference type="EC" id="6.3.1.5" evidence="1"/>
<dbReference type="EMBL" id="CP000725">
    <property type="protein sequence ID" value="ABV10367.1"/>
    <property type="molecule type" value="Genomic_DNA"/>
</dbReference>
<dbReference type="RefSeq" id="WP_012000079.1">
    <property type="nucleotide sequence ID" value="NC_009785.1"/>
</dbReference>
<dbReference type="SMR" id="A8AVT9"/>
<dbReference type="STRING" id="467705.SGO_0583"/>
<dbReference type="KEGG" id="sgo:SGO_0583"/>
<dbReference type="eggNOG" id="COG0171">
    <property type="taxonomic scope" value="Bacteria"/>
</dbReference>
<dbReference type="HOGENOM" id="CLU_059327_3_0_9"/>
<dbReference type="UniPathway" id="UPA00253">
    <property type="reaction ID" value="UER00333"/>
</dbReference>
<dbReference type="Proteomes" id="UP000001131">
    <property type="component" value="Chromosome"/>
</dbReference>
<dbReference type="GO" id="GO:0005737">
    <property type="term" value="C:cytoplasm"/>
    <property type="evidence" value="ECO:0007669"/>
    <property type="project" value="InterPro"/>
</dbReference>
<dbReference type="GO" id="GO:0005524">
    <property type="term" value="F:ATP binding"/>
    <property type="evidence" value="ECO:0007669"/>
    <property type="project" value="UniProtKB-UniRule"/>
</dbReference>
<dbReference type="GO" id="GO:0004359">
    <property type="term" value="F:glutaminase activity"/>
    <property type="evidence" value="ECO:0007669"/>
    <property type="project" value="InterPro"/>
</dbReference>
<dbReference type="GO" id="GO:0046872">
    <property type="term" value="F:metal ion binding"/>
    <property type="evidence" value="ECO:0007669"/>
    <property type="project" value="UniProtKB-KW"/>
</dbReference>
<dbReference type="GO" id="GO:0003952">
    <property type="term" value="F:NAD+ synthase (glutamine-hydrolyzing) activity"/>
    <property type="evidence" value="ECO:0007669"/>
    <property type="project" value="InterPro"/>
</dbReference>
<dbReference type="GO" id="GO:0008795">
    <property type="term" value="F:NAD+ synthase activity"/>
    <property type="evidence" value="ECO:0007669"/>
    <property type="project" value="UniProtKB-UniRule"/>
</dbReference>
<dbReference type="GO" id="GO:0009435">
    <property type="term" value="P:NAD biosynthetic process"/>
    <property type="evidence" value="ECO:0007669"/>
    <property type="project" value="UniProtKB-UniRule"/>
</dbReference>
<dbReference type="CDD" id="cd00553">
    <property type="entry name" value="NAD_synthase"/>
    <property type="match status" value="1"/>
</dbReference>
<dbReference type="FunFam" id="3.40.50.620:FF:000015">
    <property type="entry name" value="NH(3)-dependent NAD(+) synthetase"/>
    <property type="match status" value="1"/>
</dbReference>
<dbReference type="Gene3D" id="3.40.50.620">
    <property type="entry name" value="HUPs"/>
    <property type="match status" value="1"/>
</dbReference>
<dbReference type="HAMAP" id="MF_00193">
    <property type="entry name" value="NadE_ammonia_dep"/>
    <property type="match status" value="1"/>
</dbReference>
<dbReference type="InterPro" id="IPR022310">
    <property type="entry name" value="NAD/GMP_synthase"/>
</dbReference>
<dbReference type="InterPro" id="IPR003694">
    <property type="entry name" value="NAD_synthase"/>
</dbReference>
<dbReference type="InterPro" id="IPR022926">
    <property type="entry name" value="NH(3)-dep_NAD(+)_synth"/>
</dbReference>
<dbReference type="InterPro" id="IPR014729">
    <property type="entry name" value="Rossmann-like_a/b/a_fold"/>
</dbReference>
<dbReference type="NCBIfam" id="TIGR00552">
    <property type="entry name" value="nadE"/>
    <property type="match status" value="1"/>
</dbReference>
<dbReference type="NCBIfam" id="NF001979">
    <property type="entry name" value="PRK00768.1"/>
    <property type="match status" value="1"/>
</dbReference>
<dbReference type="PANTHER" id="PTHR23090">
    <property type="entry name" value="NH 3 /GLUTAMINE-DEPENDENT NAD + SYNTHETASE"/>
    <property type="match status" value="1"/>
</dbReference>
<dbReference type="PANTHER" id="PTHR23090:SF7">
    <property type="entry name" value="NH(3)-DEPENDENT NAD(+) SYNTHETASE"/>
    <property type="match status" value="1"/>
</dbReference>
<dbReference type="Pfam" id="PF02540">
    <property type="entry name" value="NAD_synthase"/>
    <property type="match status" value="1"/>
</dbReference>
<dbReference type="SUPFAM" id="SSF52402">
    <property type="entry name" value="Adenine nucleotide alpha hydrolases-like"/>
    <property type="match status" value="1"/>
</dbReference>
<sequence length="274" mass="30266">MSLQEEIIAQLGVKPIIDPEEEIRKSVDFLKAYLRKHPFLKSYVLGISGGQDSTLAGRLAQLAVEEMRAETRDDSYRFIAVRLPYGVQADEDDAQKALTFIQPDVSLTVNIKESADAMTRAVEATGAKVSDFNKGNIKARSRMIAQYALAGSYSGAVIGTDHAAENVTAFFTKFGDGGADILPLYRLNKRQGKQLLAALGADPALYEKVPTADLEEEKPGIADEVALGVTYNEIDDYLEGKSVSAQAQETIESWWHKGQHKRHLPITIFDEFWK</sequence>